<gene>
    <name type="ordered locus">str0259</name>
</gene>
<proteinExistence type="inferred from homology"/>
<name>XERDL_STRT1</name>
<sequence length="253" mass="28741">MTISSFQKQLTTQITNFLARKTISDSSKQAYAYDLKQFVNCLPGRVDQTSLKLYENQLKEWKPSVQKRKRSAVNQFLLYLYQKGELEEFFKLSETAPLPSQQEELEIFDLSSLYEGQEGPGKLACLFILELGLLPSEILELKWEDIDLDFGVVTVAKGSTKRVLRLDGALKELLFGIKNDNSQGLILSKAFTRQWLYKQIQSYVGGCGLSGVTAQALRQQYILRQIEKGTGAFELARLLGLKSPVTLEKYYKT</sequence>
<evidence type="ECO:0000255" key="1">
    <source>
        <dbReference type="HAMAP-Rule" id="MF_01817"/>
    </source>
</evidence>
<evidence type="ECO:0000255" key="2">
    <source>
        <dbReference type="PROSITE-ProRule" id="PRU01246"/>
    </source>
</evidence>
<evidence type="ECO:0000255" key="3">
    <source>
        <dbReference type="PROSITE-ProRule" id="PRU01248"/>
    </source>
</evidence>
<dbReference type="EMBL" id="CP000024">
    <property type="protein sequence ID" value="AAV61872.1"/>
    <property type="molecule type" value="Genomic_DNA"/>
</dbReference>
<dbReference type="SMR" id="Q5M1I1"/>
<dbReference type="KEGG" id="stc:str0259"/>
<dbReference type="HOGENOM" id="CLU_1128554_0_0_9"/>
<dbReference type="GO" id="GO:0005737">
    <property type="term" value="C:cytoplasm"/>
    <property type="evidence" value="ECO:0007669"/>
    <property type="project" value="UniProtKB-SubCell"/>
</dbReference>
<dbReference type="GO" id="GO:0003677">
    <property type="term" value="F:DNA binding"/>
    <property type="evidence" value="ECO:0007669"/>
    <property type="project" value="UniProtKB-KW"/>
</dbReference>
<dbReference type="GO" id="GO:0009037">
    <property type="term" value="F:tyrosine-based site-specific recombinase activity"/>
    <property type="evidence" value="ECO:0007669"/>
    <property type="project" value="UniProtKB-UniRule"/>
</dbReference>
<dbReference type="GO" id="GO:0006313">
    <property type="term" value="P:DNA transposition"/>
    <property type="evidence" value="ECO:0007669"/>
    <property type="project" value="UniProtKB-UniRule"/>
</dbReference>
<dbReference type="CDD" id="cd01190">
    <property type="entry name" value="INT_StrepXerD_C_like"/>
    <property type="match status" value="1"/>
</dbReference>
<dbReference type="Gene3D" id="1.10.150.130">
    <property type="match status" value="1"/>
</dbReference>
<dbReference type="Gene3D" id="1.10.443.10">
    <property type="entry name" value="Intergrase catalytic core"/>
    <property type="match status" value="1"/>
</dbReference>
<dbReference type="HAMAP" id="MF_01817">
    <property type="entry name" value="Recomb_XerD_like"/>
    <property type="match status" value="1"/>
</dbReference>
<dbReference type="InterPro" id="IPR044068">
    <property type="entry name" value="CB"/>
</dbReference>
<dbReference type="InterPro" id="IPR011010">
    <property type="entry name" value="DNA_brk_join_enz"/>
</dbReference>
<dbReference type="InterPro" id="IPR013762">
    <property type="entry name" value="Integrase-like_cat_sf"/>
</dbReference>
<dbReference type="InterPro" id="IPR002104">
    <property type="entry name" value="Integrase_catalytic"/>
</dbReference>
<dbReference type="InterPro" id="IPR010998">
    <property type="entry name" value="Integrase_recombinase_N"/>
</dbReference>
<dbReference type="InterPro" id="IPR020876">
    <property type="entry name" value="Tyrosine_recombinase_XerD-like"/>
</dbReference>
<dbReference type="NCBIfam" id="NF002685">
    <property type="entry name" value="PRK02436.1"/>
    <property type="match status" value="1"/>
</dbReference>
<dbReference type="Pfam" id="PF00589">
    <property type="entry name" value="Phage_integrase"/>
    <property type="match status" value="1"/>
</dbReference>
<dbReference type="SUPFAM" id="SSF56349">
    <property type="entry name" value="DNA breaking-rejoining enzymes"/>
    <property type="match status" value="1"/>
</dbReference>
<dbReference type="PROSITE" id="PS51900">
    <property type="entry name" value="CB"/>
    <property type="match status" value="1"/>
</dbReference>
<dbReference type="PROSITE" id="PS51898">
    <property type="entry name" value="TYR_RECOMBINASE"/>
    <property type="match status" value="1"/>
</dbReference>
<keyword id="KW-0963">Cytoplasm</keyword>
<keyword id="KW-0229">DNA integration</keyword>
<keyword id="KW-0233">DNA recombination</keyword>
<keyword id="KW-0238">DNA-binding</keyword>
<protein>
    <recommendedName>
        <fullName evidence="1">Tyrosine recombinase XerD-like</fullName>
    </recommendedName>
</protein>
<comment type="function">
    <text evidence="1">Putative tyrosine recombinase. Not involved in the cutting and rejoining of the recombining DNA molecules on dif(SL) site.</text>
</comment>
<comment type="subcellular location">
    <subcellularLocation>
        <location evidence="1">Cytoplasm</location>
    </subcellularLocation>
</comment>
<comment type="similarity">
    <text evidence="1">Belongs to the 'phage' integrase family. XerD-like subfamily.</text>
</comment>
<reference key="1">
    <citation type="journal article" date="2004" name="Nat. Biotechnol.">
        <title>Complete sequence and comparative genome analysis of the dairy bacterium Streptococcus thermophilus.</title>
        <authorList>
            <person name="Bolotin A."/>
            <person name="Quinquis B."/>
            <person name="Renault P."/>
            <person name="Sorokin A."/>
            <person name="Ehrlich S.D."/>
            <person name="Kulakauskas S."/>
            <person name="Lapidus A."/>
            <person name="Goltsman E."/>
            <person name="Mazur M."/>
            <person name="Pusch G.D."/>
            <person name="Fonstein M."/>
            <person name="Overbeek R."/>
            <person name="Kyprides N."/>
            <person name="Purnelle B."/>
            <person name="Prozzi D."/>
            <person name="Ngui K."/>
            <person name="Masuy D."/>
            <person name="Hancy F."/>
            <person name="Burteau S."/>
            <person name="Boutry M."/>
            <person name="Delcour J."/>
            <person name="Goffeau A."/>
            <person name="Hols P."/>
        </authorList>
    </citation>
    <scope>NUCLEOTIDE SEQUENCE [LARGE SCALE GENOMIC DNA]</scope>
    <source>
        <strain>CNRZ 1066</strain>
    </source>
</reference>
<organism>
    <name type="scientific">Streptococcus thermophilus (strain CNRZ 1066)</name>
    <dbReference type="NCBI Taxonomy" id="299768"/>
    <lineage>
        <taxon>Bacteria</taxon>
        <taxon>Bacillati</taxon>
        <taxon>Bacillota</taxon>
        <taxon>Bacilli</taxon>
        <taxon>Lactobacillales</taxon>
        <taxon>Streptococcaceae</taxon>
        <taxon>Streptococcus</taxon>
    </lineage>
</organism>
<accession>Q5M1I1</accession>
<feature type="chain" id="PRO_0000355199" description="Tyrosine recombinase XerD-like">
    <location>
        <begin position="1"/>
        <end position="253"/>
    </location>
</feature>
<feature type="domain" description="Core-binding (CB)" evidence="3">
    <location>
        <begin position="8"/>
        <end position="81"/>
    </location>
</feature>
<feature type="domain" description="Tyr recombinase" evidence="2">
    <location>
        <begin position="93"/>
        <end position="253"/>
    </location>
</feature>
<feature type="active site" evidence="2">
    <location>
        <position position="157"/>
    </location>
</feature>
<feature type="active site" evidence="2">
    <location>
        <position position="218"/>
    </location>
</feature>
<feature type="active site" description="O-(3'-phospho-DNA)-tyrosine intermediate" evidence="2">
    <location>
        <position position="250"/>
    </location>
</feature>